<reference key="1">
    <citation type="journal article" date="2008" name="Nucleic Acids Res.">
        <title>The complete nucleotide sequences of the five genetically distinct plastid genomes of Oenothera, subsection Oenothera: I. Sequence evaluation and plastome evolution.</title>
        <authorList>
            <person name="Greiner S."/>
            <person name="Wang X."/>
            <person name="Rauwolf U."/>
            <person name="Silber M.V."/>
            <person name="Mayer K."/>
            <person name="Meurer J."/>
            <person name="Haberer G."/>
            <person name="Herrmann R.G."/>
        </authorList>
    </citation>
    <scope>NUCLEOTIDE SEQUENCE [LARGE SCALE GENOMIC DNA]</scope>
    <source>
        <strain>cv. Suaveolens Grado</strain>
    </source>
</reference>
<evidence type="ECO:0000250" key="1"/>
<evidence type="ECO:0000305" key="2"/>
<accession>B0Z4Z9</accession>
<gene>
    <name type="primary">rpl22</name>
</gene>
<feature type="chain" id="PRO_0000354587" description="Large ribosomal subunit protein uL22c">
    <location>
        <begin position="1"/>
        <end position="137"/>
    </location>
</feature>
<keyword id="KW-0150">Chloroplast</keyword>
<keyword id="KW-0934">Plastid</keyword>
<keyword id="KW-0687">Ribonucleoprotein</keyword>
<keyword id="KW-0689">Ribosomal protein</keyword>
<keyword id="KW-0694">RNA-binding</keyword>
<keyword id="KW-0699">rRNA-binding</keyword>
<geneLocation type="chloroplast"/>
<comment type="function">
    <text evidence="1">This protein binds specifically to 23S rRNA.</text>
</comment>
<comment type="function">
    <text evidence="1">The globular domain of the protein is located near the polypeptide exit tunnel on the outside of the subunit, while an extended beta-hairpin is found that lines the wall of the exit tunnel in the center of the 70S ribosome.</text>
</comment>
<comment type="subunit">
    <text evidence="1">Part of the 50S ribosomal subunit.</text>
</comment>
<comment type="subcellular location">
    <subcellularLocation>
        <location>Plastid</location>
        <location>Chloroplast</location>
    </subcellularLocation>
</comment>
<comment type="similarity">
    <text evidence="2">Belongs to the universal ribosomal protein uL22 family.</text>
</comment>
<sequence>MKKKKTYGEVYALGQYISMSAPKARRVIDQIRGRSYEETLMLLALMPYRACDPILKLVNSAAANARHNMSFNEATLVISKAEVNEGTTVKKLKPRARGRSYPIRRPTCHIRIVLQDTSFDEFEEDFFSLKKDAWEKK</sequence>
<dbReference type="EMBL" id="EU262889">
    <property type="protein sequence ID" value="ABW98911.1"/>
    <property type="molecule type" value="Genomic_DNA"/>
</dbReference>
<dbReference type="RefSeq" id="YP_001687406.1">
    <property type="nucleotide sequence ID" value="NC_010361.1"/>
</dbReference>
<dbReference type="SMR" id="B0Z4Z9"/>
<dbReference type="GeneID" id="5952044"/>
<dbReference type="GO" id="GO:0009507">
    <property type="term" value="C:chloroplast"/>
    <property type="evidence" value="ECO:0007669"/>
    <property type="project" value="UniProtKB-SubCell"/>
</dbReference>
<dbReference type="GO" id="GO:0015934">
    <property type="term" value="C:large ribosomal subunit"/>
    <property type="evidence" value="ECO:0007669"/>
    <property type="project" value="InterPro"/>
</dbReference>
<dbReference type="GO" id="GO:0019843">
    <property type="term" value="F:rRNA binding"/>
    <property type="evidence" value="ECO:0007669"/>
    <property type="project" value="UniProtKB-UniRule"/>
</dbReference>
<dbReference type="GO" id="GO:0003735">
    <property type="term" value="F:structural constituent of ribosome"/>
    <property type="evidence" value="ECO:0007669"/>
    <property type="project" value="InterPro"/>
</dbReference>
<dbReference type="GO" id="GO:0006412">
    <property type="term" value="P:translation"/>
    <property type="evidence" value="ECO:0007669"/>
    <property type="project" value="UniProtKB-UniRule"/>
</dbReference>
<dbReference type="CDD" id="cd00336">
    <property type="entry name" value="Ribosomal_L22"/>
    <property type="match status" value="1"/>
</dbReference>
<dbReference type="FunFam" id="3.90.470.10:FF:000006">
    <property type="entry name" value="50S ribosomal protein L22, chloroplastic"/>
    <property type="match status" value="1"/>
</dbReference>
<dbReference type="Gene3D" id="3.90.470.10">
    <property type="entry name" value="Ribosomal protein L22/L17"/>
    <property type="match status" value="1"/>
</dbReference>
<dbReference type="HAMAP" id="MF_01331_B">
    <property type="entry name" value="Ribosomal_uL22_B"/>
    <property type="match status" value="1"/>
</dbReference>
<dbReference type="InterPro" id="IPR001063">
    <property type="entry name" value="Ribosomal_uL22"/>
</dbReference>
<dbReference type="InterPro" id="IPR005727">
    <property type="entry name" value="Ribosomal_uL22_bac/chlpt-type"/>
</dbReference>
<dbReference type="InterPro" id="IPR047867">
    <property type="entry name" value="Ribosomal_uL22_bac/org-type"/>
</dbReference>
<dbReference type="InterPro" id="IPR018260">
    <property type="entry name" value="Ribosomal_uL22_CS"/>
</dbReference>
<dbReference type="InterPro" id="IPR036394">
    <property type="entry name" value="Ribosomal_uL22_sf"/>
</dbReference>
<dbReference type="NCBIfam" id="TIGR01044">
    <property type="entry name" value="rplV_bact"/>
    <property type="match status" value="1"/>
</dbReference>
<dbReference type="PANTHER" id="PTHR13501">
    <property type="entry name" value="CHLOROPLAST 50S RIBOSOMAL PROTEIN L22-RELATED"/>
    <property type="match status" value="1"/>
</dbReference>
<dbReference type="PANTHER" id="PTHR13501:SF10">
    <property type="entry name" value="LARGE RIBOSOMAL SUBUNIT PROTEIN UL22M"/>
    <property type="match status" value="1"/>
</dbReference>
<dbReference type="Pfam" id="PF00237">
    <property type="entry name" value="Ribosomal_L22"/>
    <property type="match status" value="1"/>
</dbReference>
<dbReference type="SUPFAM" id="SSF54843">
    <property type="entry name" value="Ribosomal protein L22"/>
    <property type="match status" value="1"/>
</dbReference>
<dbReference type="PROSITE" id="PS00464">
    <property type="entry name" value="RIBOSOMAL_L22"/>
    <property type="match status" value="1"/>
</dbReference>
<proteinExistence type="inferred from homology"/>
<protein>
    <recommendedName>
        <fullName evidence="2">Large ribosomal subunit protein uL22c</fullName>
    </recommendedName>
    <alternativeName>
        <fullName>50S ribosomal protein L22, chloroplastic</fullName>
    </alternativeName>
</protein>
<name>RK22_OENBI</name>
<organism>
    <name type="scientific">Oenothera biennis</name>
    <name type="common">German evening primrose</name>
    <name type="synonym">Onagra biennis</name>
    <dbReference type="NCBI Taxonomy" id="3942"/>
    <lineage>
        <taxon>Eukaryota</taxon>
        <taxon>Viridiplantae</taxon>
        <taxon>Streptophyta</taxon>
        <taxon>Embryophyta</taxon>
        <taxon>Tracheophyta</taxon>
        <taxon>Spermatophyta</taxon>
        <taxon>Magnoliopsida</taxon>
        <taxon>eudicotyledons</taxon>
        <taxon>Gunneridae</taxon>
        <taxon>Pentapetalae</taxon>
        <taxon>rosids</taxon>
        <taxon>malvids</taxon>
        <taxon>Myrtales</taxon>
        <taxon>Onagraceae</taxon>
        <taxon>Onagroideae</taxon>
        <taxon>Onagreae</taxon>
        <taxon>Oenothera</taxon>
    </lineage>
</organism>